<keyword id="KW-0028">Amino-acid biosynthesis</keyword>
<keyword id="KW-0963">Cytoplasm</keyword>
<keyword id="KW-0368">Histidine biosynthesis</keyword>
<keyword id="KW-1185">Reference proteome</keyword>
<dbReference type="EMBL" id="AM167904">
    <property type="protein sequence ID" value="CAJ49944.1"/>
    <property type="molecule type" value="Genomic_DNA"/>
</dbReference>
<dbReference type="RefSeq" id="WP_012417995.1">
    <property type="nucleotide sequence ID" value="NC_010645.1"/>
</dbReference>
<dbReference type="SMR" id="Q2KYA6"/>
<dbReference type="STRING" id="360910.BAV2334"/>
<dbReference type="GeneID" id="92934489"/>
<dbReference type="KEGG" id="bav:BAV2334"/>
<dbReference type="eggNOG" id="COG3705">
    <property type="taxonomic scope" value="Bacteria"/>
</dbReference>
<dbReference type="HOGENOM" id="CLU_025113_0_1_4"/>
<dbReference type="OrthoDB" id="9769617at2"/>
<dbReference type="UniPathway" id="UPA00031">
    <property type="reaction ID" value="UER00006"/>
</dbReference>
<dbReference type="Proteomes" id="UP000001977">
    <property type="component" value="Chromosome"/>
</dbReference>
<dbReference type="GO" id="GO:0005737">
    <property type="term" value="C:cytoplasm"/>
    <property type="evidence" value="ECO:0007669"/>
    <property type="project" value="UniProtKB-SubCell"/>
</dbReference>
<dbReference type="GO" id="GO:0004821">
    <property type="term" value="F:histidine-tRNA ligase activity"/>
    <property type="evidence" value="ECO:0007669"/>
    <property type="project" value="TreeGrafter"/>
</dbReference>
<dbReference type="GO" id="GO:0006427">
    <property type="term" value="P:histidyl-tRNA aminoacylation"/>
    <property type="evidence" value="ECO:0007669"/>
    <property type="project" value="TreeGrafter"/>
</dbReference>
<dbReference type="GO" id="GO:0000105">
    <property type="term" value="P:L-histidine biosynthetic process"/>
    <property type="evidence" value="ECO:0007669"/>
    <property type="project" value="UniProtKB-UniRule"/>
</dbReference>
<dbReference type="Gene3D" id="3.30.930.10">
    <property type="entry name" value="Bira Bifunctional Protein, Domain 2"/>
    <property type="match status" value="1"/>
</dbReference>
<dbReference type="HAMAP" id="MF_00125">
    <property type="entry name" value="HisZ"/>
    <property type="match status" value="1"/>
</dbReference>
<dbReference type="InterPro" id="IPR045864">
    <property type="entry name" value="aa-tRNA-synth_II/BPL/LPL"/>
</dbReference>
<dbReference type="InterPro" id="IPR041715">
    <property type="entry name" value="HisRS-like_core"/>
</dbReference>
<dbReference type="InterPro" id="IPR004516">
    <property type="entry name" value="HisRS/HisZ"/>
</dbReference>
<dbReference type="InterPro" id="IPR004517">
    <property type="entry name" value="HisZ"/>
</dbReference>
<dbReference type="NCBIfam" id="NF008935">
    <property type="entry name" value="PRK12292.1-1"/>
    <property type="match status" value="1"/>
</dbReference>
<dbReference type="NCBIfam" id="NF009086">
    <property type="entry name" value="PRK12421.1"/>
    <property type="match status" value="1"/>
</dbReference>
<dbReference type="PANTHER" id="PTHR43707:SF1">
    <property type="entry name" value="HISTIDINE--TRNA LIGASE, MITOCHONDRIAL-RELATED"/>
    <property type="match status" value="1"/>
</dbReference>
<dbReference type="PANTHER" id="PTHR43707">
    <property type="entry name" value="HISTIDYL-TRNA SYNTHETASE"/>
    <property type="match status" value="1"/>
</dbReference>
<dbReference type="Pfam" id="PF13393">
    <property type="entry name" value="tRNA-synt_His"/>
    <property type="match status" value="1"/>
</dbReference>
<dbReference type="PIRSF" id="PIRSF001549">
    <property type="entry name" value="His-tRNA_synth"/>
    <property type="match status" value="1"/>
</dbReference>
<dbReference type="SUPFAM" id="SSF55681">
    <property type="entry name" value="Class II aaRS and biotin synthetases"/>
    <property type="match status" value="1"/>
</dbReference>
<evidence type="ECO:0000255" key="1">
    <source>
        <dbReference type="HAMAP-Rule" id="MF_00125"/>
    </source>
</evidence>
<accession>Q2KYA6</accession>
<gene>
    <name evidence="1" type="primary">hisZ</name>
    <name type="ordered locus">BAV2334</name>
</gene>
<organism>
    <name type="scientific">Bordetella avium (strain 197N)</name>
    <dbReference type="NCBI Taxonomy" id="360910"/>
    <lineage>
        <taxon>Bacteria</taxon>
        <taxon>Pseudomonadati</taxon>
        <taxon>Pseudomonadota</taxon>
        <taxon>Betaproteobacteria</taxon>
        <taxon>Burkholderiales</taxon>
        <taxon>Alcaligenaceae</taxon>
        <taxon>Bordetella</taxon>
    </lineage>
</organism>
<proteinExistence type="inferred from homology"/>
<feature type="chain" id="PRO_0000242823" description="ATP phosphoribosyltransferase regulatory subunit">
    <location>
        <begin position="1"/>
        <end position="385"/>
    </location>
</feature>
<reference key="1">
    <citation type="journal article" date="2006" name="J. Bacteriol.">
        <title>Comparison of the genome sequence of the poultry pathogen Bordetella avium with those of B. bronchiseptica, B. pertussis, and B. parapertussis reveals extensive diversity in surface structures associated with host interaction.</title>
        <authorList>
            <person name="Sebaihia M."/>
            <person name="Preston A."/>
            <person name="Maskell D.J."/>
            <person name="Kuzmiak H."/>
            <person name="Connell T.D."/>
            <person name="King N.D."/>
            <person name="Orndorff P.E."/>
            <person name="Miyamoto D.M."/>
            <person name="Thomson N.R."/>
            <person name="Harris D."/>
            <person name="Goble A."/>
            <person name="Lord A."/>
            <person name="Murphy L."/>
            <person name="Quail M.A."/>
            <person name="Rutter S."/>
            <person name="Squares R."/>
            <person name="Squares S."/>
            <person name="Woodward J."/>
            <person name="Parkhill J."/>
            <person name="Temple L.M."/>
        </authorList>
    </citation>
    <scope>NUCLEOTIDE SEQUENCE [LARGE SCALE GENOMIC DNA]</scope>
    <source>
        <strain>197N</strain>
    </source>
</reference>
<comment type="function">
    <text evidence="1">Required for the first step of histidine biosynthesis. May allow the feedback regulation of ATP phosphoribosyltransferase activity by histidine.</text>
</comment>
<comment type="pathway">
    <text evidence="1">Amino-acid biosynthesis; L-histidine biosynthesis; L-histidine from 5-phospho-alpha-D-ribose 1-diphosphate: step 1/9.</text>
</comment>
<comment type="subunit">
    <text evidence="1">Heteromultimer composed of HisG and HisZ subunits.</text>
</comment>
<comment type="subcellular location">
    <subcellularLocation>
        <location evidence="1">Cytoplasm</location>
    </subcellularLocation>
</comment>
<comment type="miscellaneous">
    <text>This function is generally fulfilled by the C-terminal part of HisG, which is missing in some bacteria such as this one.</text>
</comment>
<comment type="similarity">
    <text evidence="1">Belongs to the class-II aminoacyl-tRNA synthetase family. HisZ subfamily.</text>
</comment>
<sequence length="385" mass="41675">MGNWLLPEGLADVLPAEARRIEELRRELLDLYRTYGFELVAPPLVEYIDSLLSGMGGDLNLYTCKLIDQLSGRTLGVRADMTTQVSRIDAHLLNRNSVTRLCYCGTVLHARPADLLSSRELLQIGAEIYGHVGFEADLEILQLVLETVAIAGVSRPRLDLSHPGVVKALFDADPAAAAISGRIIMLLREKDVAGLAELAGVEPALRADTLAALGALVRLYGEIDVIDRARQELPALPALVLALDELERLARAVPDVALGLDLADVGGYGYHSGVTFELYAQGWHDALVRGGRYDDVGRAFGRARPATGFSLDLRKLAAGLSPAEPGRAIRAPWGQDPALVGAVRALRHTGEIVVQVLPGHEHDQDEFVCDRELVLQDGAWTVKTL</sequence>
<name>HISZ_BORA1</name>
<protein>
    <recommendedName>
        <fullName evidence="1">ATP phosphoribosyltransferase regulatory subunit</fullName>
    </recommendedName>
</protein>